<sequence length="552" mass="60868">MSLSRSEEMHRLTENVYKTIMEQFNPSLRNFIAMGKNYEKALAGVTYAAKGYFDALVKMGELASESQGSKELGDVLFQMAEVHRQIQNQLEEMLKSFHNELLTQLEQKVELDSRYLSAALKKYQTEQRSKGDALDKCQAELKKLRKKSQGSKNPQKYSDKELQYIDAISNKQGELENYVSDGYKTALTEERRRFCFLVEKQCAVAKNSAAYHSKGKELLAQKLPLWQQACADPSKIPERAVQLMQQVASNGATLPSALSASKSNLVISDPIPGAKPLPVPPELAPFVGRMSAQESTPIMNGVTGPDGEDYSPWADRKAAQPKSLSPPQSQSKLSDSYSNTLPVRKSVTPKNSYATTENKTLPRSSSMAAGLERNGRMRVKAIFSHAAGDNSTLLSFKEGDLITLLVPEARDGWHYGESEKTKMRGWFPFSYTRVLDSDGSDRLHMSLQQGKSSSTGNLLDKDDLAIPPPDYGAASRAFPAQTASGFKQRPYSVAVPAFSQGLDDYGARSMSRNPFAHVQLKPTVTNDRCDLSAQGPEGREHGDGSARTLAGR</sequence>
<reference key="1">
    <citation type="journal article" date="1999" name="Cytogenet. Cell Genet.">
        <title>Identification of BAIAP2 (BAI-associated protein 2), a novel human homologue of hamster IRSp53, whose SH3 domain interacts with the cytoplasmic domain of BAI1.</title>
        <authorList>
            <person name="Oda K."/>
            <person name="Shiratsuchi T."/>
            <person name="Nishimori H."/>
            <person name="Inazawa J."/>
            <person name="Yoshikawa H."/>
            <person name="Taketani Y."/>
            <person name="Nakamura Y."/>
            <person name="Tokino T."/>
        </authorList>
    </citation>
    <scope>NUCLEOTIDE SEQUENCE [MRNA] (ISOFORMS 4 AND 5)</scope>
    <scope>INTERACTION WITH ADGRB1</scope>
    <scope>SUBCELLULAR LOCATION</scope>
    <scope>TISSUE SPECIFICITY</scope>
    <source>
        <tissue>Fetal brain</tissue>
    </source>
</reference>
<reference key="2">
    <citation type="journal article" date="1999" name="Hum. Mol. Genet.">
        <title>Dentatorubral-pallidoluysian atrophy protein interacts through a proline-rich region near polyglutamine with the SH3 domain of an insulin receptor tyrosine kinase substrate.</title>
        <authorList>
            <person name="Okamura-Oho Y."/>
            <person name="Miyashita T."/>
            <person name="Ohmi K."/>
            <person name="Yamada M."/>
        </authorList>
    </citation>
    <scope>NUCLEOTIDE SEQUENCE [MRNA] (ISOFORMS 1 AND 4)</scope>
    <scope>PHOSPHORYLATION AT TYROSINE RESIDUES</scope>
    <scope>SUBCELLULAR LOCATION</scope>
    <scope>INTERACTION WITH ATN1</scope>
    <scope>TISSUE SPECIFICITY</scope>
    <source>
        <tissue>Fetal brain</tissue>
    </source>
</reference>
<reference key="3">
    <citation type="journal article" date="2003" name="J. Hum. Genet.">
        <title>Genomic structure and alternative splicing of the insulin receptor tyrosine kinase substrate of 53-kDa protein.</title>
        <authorList>
            <person name="Miyahara A."/>
            <person name="Okumura-Oho Y."/>
            <person name="Miyashita T."/>
            <person name="Hoshika A."/>
            <person name="Yamada M."/>
        </authorList>
    </citation>
    <scope>NUCLEOTIDE SEQUENCE [GENOMIC DNA] (ISOFORMS 1; 2; 4 AND 5)</scope>
</reference>
<reference key="4">
    <citation type="submission" date="2005-04" db="EMBL/GenBank/DDBJ databases">
        <authorList>
            <person name="Suzuki Y."/>
            <person name="Sugano S."/>
            <person name="Totoki Y."/>
            <person name="Toyoda A."/>
            <person name="Takeda T."/>
            <person name="Sakaki Y."/>
            <person name="Tanaka A."/>
            <person name="Yokoyama S."/>
        </authorList>
    </citation>
    <scope>NUCLEOTIDE SEQUENCE [LARGE SCALE MRNA] (ISOFORM 6)</scope>
    <source>
        <tissue>Brain</tissue>
    </source>
</reference>
<reference key="5">
    <citation type="journal article" date="2004" name="Genome Res.">
        <title>The status, quality, and expansion of the NIH full-length cDNA project: the Mammalian Gene Collection (MGC).</title>
        <authorList>
            <consortium name="The MGC Project Team"/>
        </authorList>
    </citation>
    <scope>NUCLEOTIDE SEQUENCE [LARGE SCALE MRNA] (ISOFORMS 3; 4 AND 6)</scope>
    <source>
        <tissue>Brain</tissue>
        <tissue>Duodenum</tissue>
    </source>
</reference>
<reference key="6">
    <citation type="submission" date="1996-09" db="EMBL/GenBank/DDBJ databases">
        <title>A Fas-ligand associated factor 3, FLAF3, potentiates Fas-ligand stability.</title>
        <authorList>
            <person name="Hachiya T."/>
            <person name="Kobayasi A."/>
            <person name="Touji S."/>
            <person name="Tamai K."/>
        </authorList>
    </citation>
    <scope>NUCLEOTIDE SEQUENCE [MRNA] OF 1-328</scope>
    <source>
        <tissue>Placenta</tissue>
    </source>
</reference>
<reference key="7">
    <citation type="journal article" date="2000" name="Nature">
        <title>IRSp53 is an essential intermediate between Rac and WAVE in the regulation of membrane ruffling.</title>
        <authorList>
            <person name="Miki H."/>
            <person name="Yamaguchi H."/>
            <person name="Suetsugu S."/>
            <person name="Takenawa T."/>
        </authorList>
    </citation>
    <scope>FUNCTION</scope>
    <scope>INTERACTION WITH RAC1; CDC42; WASF1 AND WASF2</scope>
</reference>
<reference key="8">
    <citation type="journal article" date="2001" name="Curr. Biol.">
        <title>Cdc42 induces filopodia by promoting the formation of an IRSp53:Mena complex.</title>
        <authorList>
            <person name="Krugmann S."/>
            <person name="Jordens I."/>
            <person name="Gevaert K."/>
            <person name="Driessens M."/>
            <person name="Vandekerckhove J."/>
            <person name="Hall A."/>
        </authorList>
    </citation>
    <scope>FUNCTION</scope>
    <scope>INTERACTION WITH CDC42 AND ENAH</scope>
    <scope>MUTAGENESIS OF PHE-427 AND PRO-428</scope>
</reference>
<reference key="9">
    <citation type="journal article" date="2001" name="J. Cell Biol.">
        <title>Cdc42Hs facilitates cytoskeletal reorganization and neurite outgrowth by localizing the 58-kD insulin receptor substrate to filamentous actin.</title>
        <authorList>
            <person name="Govind S."/>
            <person name="Kozma R."/>
            <person name="Monfries C."/>
            <person name="Lim L."/>
            <person name="Ahmed S."/>
        </authorList>
    </citation>
    <scope>INTERACTION WITH CDC42</scope>
    <scope>MUTAGENESIS OF ILE-267</scope>
    <scope>TISSUE SPECIFICITY</scope>
</reference>
<reference key="10">
    <citation type="journal article" date="2002" name="Mol. Cell. Neurosci.">
        <title>The insulin receptor substrate IRSp53 links postsynaptic shank1 to the small G-protein cdc42.</title>
        <authorList>
            <person name="Soltau M."/>
            <person name="Richter D."/>
            <person name="Kreienkamp H.-J."/>
        </authorList>
    </citation>
    <scope>INTERACTION WITH SHANK1; SHANK2; SHANK3 AND CDC42</scope>
    <scope>SUBCELLULAR LOCATION</scope>
</reference>
<reference key="11">
    <citation type="journal article" date="2004" name="Cancer Res.">
        <title>IRSp53/Eps8 complex is important for positive regulation of Rac and cancer cell motility/invasiveness.</title>
        <authorList>
            <person name="Funato Y."/>
            <person name="Terabayashi T."/>
            <person name="Suenaga N."/>
            <person name="Seiki M."/>
            <person name="Takenawa T."/>
            <person name="Miki H."/>
        </authorList>
    </citation>
    <scope>INTERACTION WITH EPS8</scope>
    <scope>SUBCELLULAR LOCATION</scope>
</reference>
<reference key="12">
    <citation type="journal article" date="2004" name="J. Biol. Chem.">
        <title>A novel actin bundling/filopodium-forming domain conserved in insulin receptor tyrosine kinase substrate p53 and missing in metastasis protein.</title>
        <authorList>
            <person name="Yamagishi A."/>
            <person name="Masuda M."/>
            <person name="Ohki T."/>
            <person name="Onishi H."/>
            <person name="Mochizuki N."/>
        </authorList>
    </citation>
    <scope>DOMAIN</scope>
    <scope>FUNCTION</scope>
</reference>
<reference key="13">
    <citation type="journal article" date="2006" name="Nat. Cell Biol.">
        <title>Regulation of cell shape by Cdc42 is mediated by the synergic actin-bundling activity of the Eps8-IRSp53 complex.</title>
        <authorList>
            <person name="Disanza A."/>
            <person name="Mantoani S."/>
            <person name="Hertzog M."/>
            <person name="Gerboth S."/>
            <person name="Frittoli E."/>
            <person name="Steffen A."/>
            <person name="Berhoerster K."/>
            <person name="Kreienkamp H.J."/>
            <person name="Milanesi F."/>
            <person name="Di Fiore P.P."/>
            <person name="Ciliberto A."/>
            <person name="Stradal T.E."/>
            <person name="Scita G."/>
        </authorList>
    </citation>
    <scope>FUNCTION</scope>
    <scope>INTERACTION WITH EPS8</scope>
    <scope>MUTAGENESIS OF TRP-413</scope>
</reference>
<reference key="14">
    <citation type="journal article" date="2008" name="Proc. Natl. Acad. Sci. U.S.A.">
        <title>A quantitative atlas of mitotic phosphorylation.</title>
        <authorList>
            <person name="Dephoure N."/>
            <person name="Zhou C."/>
            <person name="Villen J."/>
            <person name="Beausoleil S.A."/>
            <person name="Bakalarski C.E."/>
            <person name="Elledge S.J."/>
            <person name="Gygi S.P."/>
        </authorList>
    </citation>
    <scope>PHOSPHORYLATION [LARGE SCALE ANALYSIS] AT THR-296; SER-323; SER-325; SER-346 AND SER-366</scope>
    <scope>IDENTIFICATION BY MASS SPECTROMETRY [LARGE SCALE ANALYSIS]</scope>
    <source>
        <tissue>Cervix carcinoma</tissue>
    </source>
</reference>
<reference key="15">
    <citation type="journal article" date="2009" name="Anal. Chem.">
        <title>Lys-N and trypsin cover complementary parts of the phosphoproteome in a refined SCX-based approach.</title>
        <authorList>
            <person name="Gauci S."/>
            <person name="Helbig A.O."/>
            <person name="Slijper M."/>
            <person name="Krijgsveld J."/>
            <person name="Heck A.J."/>
            <person name="Mohammed S."/>
        </authorList>
    </citation>
    <scope>IDENTIFICATION BY MASS SPECTROMETRY [LARGE SCALE ANALYSIS]</scope>
</reference>
<reference key="16">
    <citation type="journal article" date="2009" name="Cell Host Microbe">
        <title>IRSp53 links the enterohemorrhagic E. coli effectors Tir and EspFU for actin pedestal formation.</title>
        <authorList>
            <person name="Weiss S.M."/>
            <person name="Ladwein M."/>
            <person name="Schmidt D."/>
            <person name="Ehinger J."/>
            <person name="Lommel S."/>
            <person name="Stading K."/>
            <person name="Beutling U."/>
            <person name="Disanza A."/>
            <person name="Frank R."/>
            <person name="Jansch L."/>
            <person name="Scita G."/>
            <person name="Gunzer F."/>
            <person name="Rottner K."/>
            <person name="Stradal T.E."/>
        </authorList>
    </citation>
    <scope>INTERACTION WITH E.COLI EFFECTOR PROTEIN ESPF(U) AND WITH E.COLI INTIMIN RECEPTOR TIR</scope>
</reference>
<reference key="17">
    <citation type="journal article" date="2009" name="Proc. Natl. Acad. Sci. U.S.A.">
        <title>Insulin receptor tyrosine kinase substrate links the E. coli O157:H7 actin assembly effectors Tir and EspF(U) during pedestal formation.</title>
        <authorList>
            <person name="Vingadassalom D."/>
            <person name="Kazlauskas A."/>
            <person name="Skehan B."/>
            <person name="Cheng H.C."/>
            <person name="Magoun L."/>
            <person name="Robbins D."/>
            <person name="Rosen M.K."/>
            <person name="Saksela K."/>
            <person name="Leong J.M."/>
        </authorList>
    </citation>
    <scope>FUNCTION</scope>
    <scope>INTERACTION WITH E.COLI EFFECTOR PROTEIN ESPF(U)</scope>
    <scope>SUBCELLULAR LOCATION</scope>
</reference>
<reference key="18">
    <citation type="journal article" date="2010" name="Sci. Signal.">
        <title>Quantitative phosphoproteomics reveals widespread full phosphorylation site occupancy during mitosis.</title>
        <authorList>
            <person name="Olsen J.V."/>
            <person name="Vermeulen M."/>
            <person name="Santamaria A."/>
            <person name="Kumar C."/>
            <person name="Miller M.L."/>
            <person name="Jensen L.J."/>
            <person name="Gnad F."/>
            <person name="Cox J."/>
            <person name="Jensen T.S."/>
            <person name="Nigg E.A."/>
            <person name="Brunak S."/>
            <person name="Mann M."/>
        </authorList>
    </citation>
    <scope>PHOSPHORYLATION [LARGE SCALE ANALYSIS] AT THR-340</scope>
    <scope>IDENTIFICATION BY MASS SPECTROMETRY [LARGE SCALE ANALYSIS]</scope>
    <source>
        <tissue>Cervix carcinoma</tissue>
    </source>
</reference>
<reference key="19">
    <citation type="journal article" date="2011" name="BMC Syst. Biol.">
        <title>Initial characterization of the human central proteome.</title>
        <authorList>
            <person name="Burkard T.R."/>
            <person name="Planyavsky M."/>
            <person name="Kaupe I."/>
            <person name="Breitwieser F.P."/>
            <person name="Buerckstuemmer T."/>
            <person name="Bennett K.L."/>
            <person name="Superti-Furga G."/>
            <person name="Colinge J."/>
        </authorList>
    </citation>
    <scope>IDENTIFICATION BY MASS SPECTROMETRY [LARGE SCALE ANALYSIS]</scope>
</reference>
<reference key="20">
    <citation type="journal article" date="2011" name="Sci. Signal.">
        <title>System-wide temporal characterization of the proteome and phosphoproteome of human embryonic stem cell differentiation.</title>
        <authorList>
            <person name="Rigbolt K.T."/>
            <person name="Prokhorova T.A."/>
            <person name="Akimov V."/>
            <person name="Henningsen J."/>
            <person name="Johansen P.T."/>
            <person name="Kratchmarova I."/>
            <person name="Kassem M."/>
            <person name="Mann M."/>
            <person name="Olsen J.V."/>
            <person name="Blagoev B."/>
        </authorList>
    </citation>
    <scope>PHOSPHORYLATION [LARGE SCALE ANALYSIS] AT SER-454</scope>
    <scope>IDENTIFICATION BY MASS SPECTROMETRY [LARGE SCALE ANALYSIS]</scope>
</reference>
<reference key="21">
    <citation type="journal article" date="2013" name="J. Proteome Res.">
        <title>Toward a comprehensive characterization of a human cancer cell phosphoproteome.</title>
        <authorList>
            <person name="Zhou H."/>
            <person name="Di Palma S."/>
            <person name="Preisinger C."/>
            <person name="Peng M."/>
            <person name="Polat A.N."/>
            <person name="Heck A.J."/>
            <person name="Mohammed S."/>
        </authorList>
    </citation>
    <scope>PHOSPHORYLATION [LARGE SCALE ANALYSIS] AT SER-261; SER-325; SER-336; THR-340; THR-360; SER-366 AND SER-384</scope>
    <scope>IDENTIFICATION BY MASS SPECTROMETRY [LARGE SCALE ANALYSIS]</scope>
    <source>
        <tissue>Cervix carcinoma</tissue>
        <tissue>Erythroleukemia</tissue>
    </source>
</reference>
<reference key="22">
    <citation type="journal article" date="2014" name="J. Proteomics">
        <title>An enzyme assisted RP-RPLC approach for in-depth analysis of human liver phosphoproteome.</title>
        <authorList>
            <person name="Bian Y."/>
            <person name="Song C."/>
            <person name="Cheng K."/>
            <person name="Dong M."/>
            <person name="Wang F."/>
            <person name="Huang J."/>
            <person name="Sun D."/>
            <person name="Wang L."/>
            <person name="Ye M."/>
            <person name="Zou H."/>
        </authorList>
    </citation>
    <scope>PHOSPHORYLATION [LARGE SCALE ANALYSIS] AT SER-366</scope>
    <scope>IDENTIFICATION BY MASS SPECTROMETRY [LARGE SCALE ANALYSIS]</scope>
    <source>
        <tissue>Liver</tissue>
    </source>
</reference>
<reference key="23">
    <citation type="journal article" date="2005" name="EMBO J.">
        <title>Structural basis of filopodia formation induced by the IRSp53/MIM homology domain of human IRSp53.</title>
        <authorList>
            <person name="Millard T.H."/>
            <person name="Bompard G."/>
            <person name="Heung M.Y."/>
            <person name="Dafforn T.R."/>
            <person name="Scott D.J."/>
            <person name="Machesky L.M."/>
            <person name="Fuetterer K."/>
        </authorList>
    </citation>
    <scope>X-RAY CRYSTALLOGRAPHY (2.2 ANGSTROMS) OF 1-250</scope>
    <scope>MUTAGENESIS OF LYS-142; LYS-143; LYS-146 AND LYS-147</scope>
</reference>
<reference key="24">
    <citation type="submission" date="2005-06" db="PDB data bank">
        <title>Crystal structure of RCB domain of IRSP53.</title>
        <authorList>
            <consortium name="RIKEN structural genomics initiative (RSGI)"/>
        </authorList>
    </citation>
    <scope>X-RAY CRYSTALLOGRAPHY (2.63 ANGSTROMS) OF 1-228</scope>
</reference>
<comment type="function">
    <text evidence="9 11 13 16 18">Adapter protein that links membrane-bound small G-proteins to cytoplasmic effector proteins. Necessary for CDC42-mediated reorganization of the actin cytoskeleton and for RAC1-mediated membrane ruffling. Involved in the regulation of the actin cytoskeleton by WASF family members and the Arp2/3 complex. Plays a role in neurite growth. Acts syngeristically with ENAH to promote filipodia formation. Plays a role in the reorganization of the actin cytoskeleton in response to bacterial infection. Participates in actin bundling when associated with EPS8, promoting filopodial protrusions.</text>
</comment>
<comment type="subunit">
    <text evidence="1 7 8 9 10 11 12 14 16 17 18">Homodimer. Interacts with CDC42 and RAC1 that have been activated by GTP binding. Interacts with ATN1, ADGRB1, EPS8, SHANK1, SHANK2, SHANK3, WASF1 and WASF2. Interacts with ENAH after recruitment of CDC42. Interacts with TIAM1 and DIAPH1 (By similarity). Interacts (via SH3 domain) with E.coli effector protein EspF(U) (via PXXP motifs). Interacts with E.coli intimin receptor Tir.</text>
</comment>
<comment type="interaction">
    <interactant intactId="EBI-525456">
        <id>Q9UQB8</id>
    </interactant>
    <interactant intactId="EBI-375446">
        <id>Q8IZP0</id>
        <label>ABI1</label>
    </interactant>
    <organismsDiffer>false</organismsDiffer>
    <experiments>4</experiments>
</comment>
<comment type="interaction">
    <interactant intactId="EBI-525456">
        <id>Q9UQB8</id>
    </interactant>
    <interactant intactId="EBI-353944">
        <id>P60709</id>
        <label>ACTB</label>
    </interactant>
    <organismsDiffer>false</organismsDiffer>
    <experiments>2</experiments>
</comment>
<comment type="interaction">
    <interactant intactId="EBI-525456">
        <id>Q9UQB8</id>
    </interactant>
    <interactant intactId="EBI-525456">
        <id>Q9UQB8</id>
        <label>BAIAP2</label>
    </interactant>
    <organismsDiffer>false</organismsDiffer>
    <experiments>5</experiments>
</comment>
<comment type="interaction">
    <interactant intactId="EBI-525456">
        <id>Q9UQB8</id>
    </interactant>
    <interactant intactId="EBI-2483278">
        <id>Q9UHR4</id>
        <label>BAIAP2L1</label>
    </interactant>
    <organismsDiffer>false</organismsDiffer>
    <experiments>5</experiments>
</comment>
<comment type="interaction">
    <interactant intactId="EBI-525456">
        <id>Q9UQB8</id>
    </interactant>
    <interactant intactId="EBI-741214">
        <id>Q9UFG5</id>
        <label>C19orf25</label>
    </interactant>
    <organismsDiffer>false</organismsDiffer>
    <experiments>3</experiments>
</comment>
<comment type="interaction">
    <interactant intactId="EBI-525456">
        <id>Q9UQB8</id>
    </interactant>
    <interactant intactId="EBI-81752">
        <id>P60953</id>
        <label>CDC42</label>
    </interactant>
    <organismsDiffer>false</organismsDiffer>
    <experiments>2</experiments>
</comment>
<comment type="interaction">
    <interactant intactId="EBI-525456">
        <id>Q9UQB8</id>
    </interactant>
    <interactant intactId="EBI-287394">
        <id>P60953-2</id>
        <label>CDC42</label>
    </interactant>
    <organismsDiffer>false</organismsDiffer>
    <experiments>2</experiments>
</comment>
<comment type="interaction">
    <interactant intactId="EBI-525456">
        <id>Q9UQB8</id>
    </interactant>
    <interactant intactId="EBI-297353">
        <id>P00533</id>
        <label>EGFR</label>
    </interactant>
    <organismsDiffer>false</organismsDiffer>
    <experiments>4</experiments>
</comment>
<comment type="interaction">
    <interactant intactId="EBI-525456">
        <id>Q9UQB8</id>
    </interactant>
    <interactant intactId="EBI-375576">
        <id>Q12929</id>
        <label>EPS8</label>
    </interactant>
    <organismsDiffer>false</organismsDiffer>
    <experiments>12</experiments>
</comment>
<comment type="interaction">
    <interactant intactId="EBI-525456">
        <id>Q9UQB8</id>
    </interactant>
    <interactant intactId="EBI-2556221">
        <id>Q14678</id>
        <label>KANK1</label>
    </interactant>
    <organismsDiffer>false</organismsDiffer>
    <experiments>6</experiments>
</comment>
<comment type="interaction">
    <interactant intactId="EBI-525456">
        <id>Q9UQB8</id>
    </interactant>
    <interactant intactId="EBI-745080">
        <id>Q9NZQ3</id>
        <label>NCKIPSD</label>
    </interactant>
    <organismsDiffer>false</organismsDiffer>
    <experiments>3</experiments>
</comment>
<comment type="interaction">
    <interactant intactId="EBI-525456">
        <id>Q9UQB8</id>
    </interactant>
    <interactant intactId="EBI-740924">
        <id>Q9NZ81</id>
        <label>PRR13</label>
    </interactant>
    <organismsDiffer>false</organismsDiffer>
    <experiments>3</experiments>
</comment>
<comment type="interaction">
    <interactant intactId="EBI-525456">
        <id>Q9UQB8</id>
    </interactant>
    <interactant intactId="EBI-413628">
        <id>P63000</id>
        <label>RAC1</label>
    </interactant>
    <organismsDiffer>false</organismsDiffer>
    <experiments>4</experiments>
</comment>
<comment type="interaction">
    <interactant intactId="EBI-525456">
        <id>Q9UQB8</id>
    </interactant>
    <interactant intactId="EBI-348469">
        <id>Q15427</id>
        <label>SF3B4</label>
    </interactant>
    <organismsDiffer>false</organismsDiffer>
    <experiments>3</experiments>
</comment>
<comment type="interaction">
    <interactant intactId="EBI-525456">
        <id>Q9UQB8</id>
    </interactant>
    <interactant intactId="EBI-476295">
        <id>P31947</id>
        <label>SFN</label>
    </interactant>
    <organismsDiffer>false</organismsDiffer>
    <experiments>4</experiments>
</comment>
<comment type="interaction">
    <interactant intactId="EBI-525456">
        <id>Q9UQB8</id>
    </interactant>
    <interactant intactId="EBI-10175039">
        <id>Q13625-3</id>
        <label>TP53BP2</label>
    </interactant>
    <organismsDiffer>false</organismsDiffer>
    <experiments>3</experiments>
</comment>
<comment type="interaction">
    <interactant intactId="EBI-525456">
        <id>Q9UQB8</id>
    </interactant>
    <interactant intactId="EBI-1548747">
        <id>Q92558</id>
        <label>WASF1</label>
    </interactant>
    <organismsDiffer>false</organismsDiffer>
    <experiments>3</experiments>
</comment>
<comment type="interaction">
    <interactant intactId="EBI-525456">
        <id>Q9UQB8</id>
    </interactant>
    <interactant intactId="EBI-356498">
        <id>P62258</id>
        <label>YWHAE</label>
    </interactant>
    <organismsDiffer>false</organismsDiffer>
    <experiments>7</experiments>
</comment>
<comment type="interaction">
    <interactant intactId="EBI-525456">
        <id>Q9UQB8</id>
    </interactant>
    <interactant intactId="EBI-347088">
        <id>P63104</id>
        <label>YWHAZ</label>
    </interactant>
    <organismsDiffer>false</organismsDiffer>
    <experiments>8</experiments>
</comment>
<comment type="interaction">
    <interactant intactId="EBI-525456">
        <id>Q9UQB8</id>
    </interactant>
    <interactant intactId="EBI-7023929">
        <id>Q8CFN2</id>
        <label>Cdc42</label>
    </interactant>
    <organismsDiffer>true</organismsDiffer>
    <experiments>2</experiments>
</comment>
<comment type="interaction">
    <interactant intactId="EBI-525456">
        <id>Q9UQB8</id>
    </interactant>
    <interactant intactId="EBI-6083294">
        <id>Q03173</id>
        <label>Enah</label>
    </interactant>
    <organismsDiffer>true</organismsDiffer>
    <experiments>3</experiments>
</comment>
<comment type="interaction">
    <interactant intactId="EBI-525456">
        <id>Q9UQB8</id>
    </interactant>
    <interactant intactId="EBI-375596">
        <id>Q08509</id>
        <label>Eps8</label>
    </interactant>
    <organismsDiffer>true</organismsDiffer>
    <experiments>8</experiments>
</comment>
<comment type="interaction">
    <interactant intactId="EBI-525456">
        <id>Q9UQB8</id>
    </interactant>
    <interactant intactId="EBI-6480811">
        <id>Q7DB77</id>
        <label>tir</label>
    </interactant>
    <organismsDiffer>true</organismsDiffer>
    <experiments>3</experiments>
</comment>
<comment type="interaction">
    <interactant intactId="EBI-9091996">
        <id>Q9UQB8-3</id>
    </interactant>
    <interactant intactId="EBI-11954292">
        <id>Q86V38</id>
        <label>ATN1</label>
    </interactant>
    <organismsDiffer>false</organismsDiffer>
    <experiments>3</experiments>
</comment>
<comment type="interaction">
    <interactant intactId="EBI-9091996">
        <id>Q9UQB8-3</id>
    </interactant>
    <interactant intactId="EBI-466029">
        <id>P42858</id>
        <label>HTT</label>
    </interactant>
    <organismsDiffer>false</organismsDiffer>
    <experiments>18</experiments>
</comment>
<comment type="interaction">
    <interactant intactId="EBI-9091996">
        <id>Q9UQB8-3</id>
    </interactant>
    <interactant intactId="EBI-2432309">
        <id>Q92876</id>
        <label>KLK6</label>
    </interactant>
    <organismsDiffer>false</organismsDiffer>
    <experiments>3</experiments>
</comment>
<comment type="interaction">
    <interactant intactId="EBI-9091996">
        <id>Q9UQB8-3</id>
    </interactant>
    <interactant intactId="EBI-752057">
        <id>Q7Z412</id>
        <label>PEX26</label>
    </interactant>
    <organismsDiffer>false</organismsDiffer>
    <experiments>3</experiments>
</comment>
<comment type="interaction">
    <interactant intactId="EBI-9091996">
        <id>Q9UQB8-3</id>
    </interactant>
    <interactant intactId="EBI-50433196">
        <id>A0A6Q8PF08</id>
        <label>PMP22</label>
    </interactant>
    <organismsDiffer>false</organismsDiffer>
    <experiments>3</experiments>
</comment>
<comment type="interaction">
    <interactant intactId="EBI-9091996">
        <id>Q9UQB8-3</id>
    </interactant>
    <interactant intactId="EBI-524753">
        <id>Q8IUH5</id>
        <label>ZDHHC17</label>
    </interactant>
    <organismsDiffer>false</organismsDiffer>
    <experiments>3</experiments>
</comment>
<comment type="interaction">
    <interactant intactId="EBI-6174091">
        <id>Q9UQB8-4</id>
    </interactant>
    <interactant intactId="EBI-6174091">
        <id>Q9UQB8-4</id>
        <label>BAIAP2</label>
    </interactant>
    <organismsDiffer>false</organismsDiffer>
    <experiments>4</experiments>
</comment>
<comment type="interaction">
    <interactant intactId="EBI-6174091">
        <id>Q9UQB8-4</id>
    </interactant>
    <interactant intactId="EBI-81752">
        <id>P60953</id>
        <label>CDC42</label>
    </interactant>
    <organismsDiffer>false</organismsDiffer>
    <experiments>4</experiments>
</comment>
<comment type="interaction">
    <interactant intactId="EBI-6174091">
        <id>Q9UQB8-4</id>
    </interactant>
    <interactant intactId="EBI-287394">
        <id>P60953-2</id>
        <label>CDC42</label>
    </interactant>
    <organismsDiffer>false</organismsDiffer>
    <experiments>5</experiments>
</comment>
<comment type="interaction">
    <interactant intactId="EBI-6174091">
        <id>Q9UQB8-4</id>
    </interactant>
    <interactant intactId="EBI-375576">
        <id>Q12929</id>
        <label>EPS8</label>
    </interactant>
    <organismsDiffer>false</organismsDiffer>
    <experiments>4</experiments>
</comment>
<comment type="interaction">
    <interactant intactId="EBI-6174091">
        <id>Q9UQB8-4</id>
    </interactant>
    <interactant intactId="EBI-6173812">
        <id>Q14678-2</id>
        <label>KANK1</label>
    </interactant>
    <organismsDiffer>false</organismsDiffer>
    <experiments>4</experiments>
</comment>
<comment type="interaction">
    <interactant intactId="EBI-6174091">
        <id>Q9UQB8-4</id>
    </interactant>
    <interactant intactId="EBI-748201">
        <id>P50552</id>
        <label>VASP</label>
    </interactant>
    <organismsDiffer>false</organismsDiffer>
    <experiments>6</experiments>
</comment>
<comment type="interaction">
    <interactant intactId="EBI-6174091">
        <id>Q9UQB8-4</id>
    </interactant>
    <interactant intactId="EBI-4290615">
        <id>Q9Y6W5</id>
        <label>WASF2</label>
    </interactant>
    <organismsDiffer>false</organismsDiffer>
    <experiments>5</experiments>
</comment>
<comment type="interaction">
    <interactant intactId="EBI-6174091">
        <id>Q9UQB8-4</id>
    </interactant>
    <interactant intactId="EBI-2504426">
        <id>B7UM99</id>
        <label>tir</label>
    </interactant>
    <organismsDiffer>true</organismsDiffer>
    <experiments>3</experiments>
</comment>
<comment type="interaction">
    <interactant intactId="EBI-6174091">
        <id>Q9UQB8-4</id>
    </interactant>
    <interactant intactId="EBI-6480811">
        <id>Q7DB77</id>
        <label>tir</label>
    </interactant>
    <organismsDiffer>true</organismsDiffer>
    <experiments>5</experiments>
</comment>
<comment type="interaction">
    <interactant intactId="EBI-9092016">
        <id>Q9UQB8-6</id>
    </interactant>
    <interactant intactId="EBI-11954292">
        <id>Q86V38</id>
        <label>ATN1</label>
    </interactant>
    <organismsDiffer>false</organismsDiffer>
    <experiments>3</experiments>
</comment>
<comment type="interaction">
    <interactant intactId="EBI-9092016">
        <id>Q9UQB8-6</id>
    </interactant>
    <interactant intactId="EBI-930964">
        <id>P54253</id>
        <label>ATXN1</label>
    </interactant>
    <organismsDiffer>false</organismsDiffer>
    <experiments>6</experiments>
</comment>
<comment type="interaction">
    <interactant intactId="EBI-9092016">
        <id>Q9UQB8-6</id>
    </interactant>
    <interactant intactId="EBI-2483278">
        <id>Q9UHR4</id>
        <label>BAIAP2L1</label>
    </interactant>
    <organismsDiffer>false</organismsDiffer>
    <experiments>3</experiments>
</comment>
<comment type="interaction">
    <interactant intactId="EBI-9092016">
        <id>Q9UQB8-6</id>
    </interactant>
    <interactant intactId="EBI-25837549">
        <id>P28329-3</id>
        <label>CHAT</label>
    </interactant>
    <organismsDiffer>false</organismsDiffer>
    <experiments>3</experiments>
</comment>
<comment type="interaction">
    <interactant intactId="EBI-9092016">
        <id>Q9UQB8-6</id>
    </interactant>
    <interactant intactId="EBI-3866319">
        <id>Q9Y2V7</id>
        <label>COG6</label>
    </interactant>
    <organismsDiffer>false</organismsDiffer>
    <experiments>3</experiments>
</comment>
<comment type="interaction">
    <interactant intactId="EBI-9092016">
        <id>Q9UQB8-6</id>
    </interactant>
    <interactant intactId="EBI-6875961">
        <id>P02489</id>
        <label>CRYAA</label>
    </interactant>
    <organismsDiffer>false</organismsDiffer>
    <experiments>3</experiments>
</comment>
<comment type="interaction">
    <interactant intactId="EBI-9092016">
        <id>Q9UQB8-6</id>
    </interactant>
    <interactant intactId="EBI-10968534">
        <id>P50570-2</id>
        <label>DNM2</label>
    </interactant>
    <organismsDiffer>false</organismsDiffer>
    <experiments>3</experiments>
</comment>
<comment type="interaction">
    <interactant intactId="EBI-9092016">
        <id>Q9UQB8-6</id>
    </interactant>
    <interactant intactId="EBI-348399">
        <id>P22607</id>
        <label>FGFR3</label>
    </interactant>
    <organismsDiffer>false</organismsDiffer>
    <experiments>3</experiments>
</comment>
<comment type="interaction">
    <interactant intactId="EBI-9092016">
        <id>Q9UQB8-6</id>
    </interactant>
    <interactant intactId="EBI-11110431">
        <id>Q8TB36</id>
        <label>GDAP1</label>
    </interactant>
    <organismsDiffer>false</organismsDiffer>
    <experiments>3</experiments>
</comment>
<comment type="interaction">
    <interactant intactId="EBI-9092016">
        <id>Q9UQB8-6</id>
    </interactant>
    <interactant intactId="EBI-744302">
        <id>P14136</id>
        <label>GFAP</label>
    </interactant>
    <organismsDiffer>false</organismsDiffer>
    <experiments>3</experiments>
</comment>
<comment type="interaction">
    <interactant intactId="EBI-9092016">
        <id>Q9UQB8-6</id>
    </interactant>
    <interactant intactId="EBI-7098661">
        <id>P13378</id>
        <label>HOXD8</label>
    </interactant>
    <organismsDiffer>false</organismsDiffer>
    <experiments>3</experiments>
</comment>
<comment type="interaction">
    <interactant intactId="EBI-9092016">
        <id>Q9UQB8-6</id>
    </interactant>
    <interactant intactId="EBI-466029">
        <id>P42858</id>
        <label>HTT</label>
    </interactant>
    <organismsDiffer>false</organismsDiffer>
    <experiments>18</experiments>
</comment>
<comment type="interaction">
    <interactant intactId="EBI-9092016">
        <id>Q9UQB8-6</id>
    </interactant>
    <interactant intactId="EBI-1055254">
        <id>Q8WXH2</id>
        <label>JPH3</label>
    </interactant>
    <organismsDiffer>false</organismsDiffer>
    <experiments>3</experiments>
</comment>
<comment type="interaction">
    <interactant intactId="EBI-9092016">
        <id>Q9UQB8-6</id>
    </interactant>
    <interactant intactId="EBI-10975473">
        <id>O60333-2</id>
        <label>KIF1B</label>
    </interactant>
    <organismsDiffer>false</organismsDiffer>
    <experiments>3</experiments>
</comment>
<comment type="interaction">
    <interactant intactId="EBI-9092016">
        <id>Q9UQB8-6</id>
    </interactant>
    <interactant intactId="EBI-2432309">
        <id>Q92876</id>
        <label>KLK6</label>
    </interactant>
    <organismsDiffer>false</organismsDiffer>
    <experiments>3</experiments>
</comment>
<comment type="interaction">
    <interactant intactId="EBI-9092016">
        <id>Q9UQB8-6</id>
    </interactant>
    <interactant intactId="EBI-2462271">
        <id>Q15428</id>
        <label>SF3A2</label>
    </interactant>
    <organismsDiffer>false</organismsDiffer>
    <experiments>3</experiments>
</comment>
<comment type="interaction">
    <interactant intactId="EBI-9092016">
        <id>Q9UQB8-6</id>
    </interactant>
    <interactant intactId="EBI-11959011">
        <id>Q9UPX8-4</id>
        <label>SHANK2</label>
    </interactant>
    <organismsDiffer>false</organismsDiffer>
    <experiments>3</experiments>
</comment>
<comment type="interaction">
    <interactant intactId="EBI-9092016">
        <id>Q9UQB8-6</id>
    </interactant>
    <interactant intactId="EBI-297043">
        <id>Q99593</id>
        <label>TBX5</label>
    </interactant>
    <organismsDiffer>false</organismsDiffer>
    <experiments>3</experiments>
</comment>
<comment type="interaction">
    <interactant intactId="EBI-9092016">
        <id>Q9UQB8-6</id>
    </interactant>
    <interactant intactId="EBI-11952721">
        <id>Q05BL1</id>
        <label>TP53BP2</label>
    </interactant>
    <organismsDiffer>false</organismsDiffer>
    <experiments>3</experiments>
</comment>
<comment type="interaction">
    <interactant intactId="EBI-9092016">
        <id>Q9UQB8-6</id>
    </interactant>
    <interactant intactId="EBI-741480">
        <id>Q9UMX0</id>
        <label>UBQLN1</label>
    </interactant>
    <organismsDiffer>false</organismsDiffer>
    <experiments>3</experiments>
</comment>
<comment type="interaction">
    <interactant intactId="EBI-9092016">
        <id>Q9UQB8-6</id>
    </interactant>
    <interactant intactId="EBI-720609">
        <id>O76024</id>
        <label>WFS1</label>
    </interactant>
    <organismsDiffer>false</organismsDiffer>
    <experiments>3</experiments>
</comment>
<comment type="interaction">
    <interactant intactId="EBI-9092016">
        <id>Q9UQB8-6</id>
    </interactant>
    <interactant intactId="EBI-524753">
        <id>Q8IUH5</id>
        <label>ZDHHC17</label>
    </interactant>
    <organismsDiffer>false</organismsDiffer>
    <experiments>2</experiments>
</comment>
<comment type="interaction">
    <interactant intactId="EBI-9092016">
        <id>Q9UQB8-6</id>
    </interactant>
    <interactant intactId="EBI-25900580">
        <id>Q9Y649</id>
    </interactant>
    <organismsDiffer>false</organismsDiffer>
    <experiments>3</experiments>
</comment>
<comment type="subcellular location">
    <subcellularLocation>
        <location>Cytoplasm</location>
    </subcellularLocation>
    <subcellularLocation>
        <location>Membrane</location>
        <topology>Peripheral membrane protein</topology>
    </subcellularLocation>
    <subcellularLocation>
        <location>Cell projection</location>
        <location>Filopodium</location>
    </subcellularLocation>
    <subcellularLocation>
        <location>Cell projection</location>
        <location>Ruffle</location>
    </subcellularLocation>
    <subcellularLocation>
        <location>Cytoplasm</location>
        <location>Cytoskeleton</location>
    </subcellularLocation>
    <text>Detected throughout the cytoplasm in the absence of specific binding partners. Detected in filopodia and close to membrane ruffles. Recruited to actin pedestals that are formed upon infection by bacteria at bacterial attachment sites.</text>
</comment>
<comment type="alternative products">
    <event type="alternative splicing"/>
    <isoform>
        <id>Q9UQB8-1</id>
        <name>1</name>
        <name>IRSp53(L)</name>
        <sequence type="displayed"/>
    </isoform>
    <isoform>
        <id>Q9UQB8-2</id>
        <name>2</name>
        <sequence type="described" ref="VSP_015506"/>
    </isoform>
    <isoform>
        <id>Q9UQB8-3</id>
        <name>3</name>
        <sequence type="described" ref="VSP_015505"/>
    </isoform>
    <isoform>
        <id>Q9UQB8-4</id>
        <name>4</name>
        <name>BAIAP2-alpha</name>
        <sequence type="described" ref="VSP_015503"/>
    </isoform>
    <isoform>
        <id>Q9UQB8-5</id>
        <name>5</name>
        <name>BAIAP2-beta</name>
        <sequence type="described" ref="VSP_015504"/>
    </isoform>
    <isoform>
        <id>Q9UQB8-6</id>
        <name>6</name>
        <sequence type="described" ref="VSP_015502 VSP_015503"/>
    </isoform>
</comment>
<comment type="tissue specificity">
    <text evidence="7 8 10">Isoform 1 and isoform 4 are expressed almost exclusively in brain. Isoform 4 is barely detectable in placenta, prostate and testis. A short isoform is ubiquitous, with the highest expression in liver, prostate, testis and placenta.</text>
</comment>
<comment type="domain">
    <text evidence="13">The IMD domain forms a coiled coil. The isolated domain can induce actin bundling and filopodia formation. In the absence of G-proteins intramolecular interaction between the IMD and the SH3 domain gives rise to an auto-inhibited state of the protein. Interaction of the IMD with RAC1 or CDC42 leads to activation.</text>
</comment>
<comment type="domain">
    <text evidence="13">The SH3 domain interacts with ATN1, ADGRB1, WASF1, WASF2, SHANK1, DIAPH1 and ENAH.</text>
</comment>
<comment type="PTM">
    <text evidence="7">Phosphorylated on tyrosine residues by INSR in response to insulin treatment.</text>
</comment>
<comment type="caution">
    <text evidence="23">It is uncertain whether Met-1 or Met-59 is the initiator.</text>
</comment>
<accession>Q9UQB8</accession>
<accession>O43858</accession>
<accession>Q53HB1</accession>
<accession>Q86WC1</accession>
<accession>Q8N5C0</accession>
<accession>Q96CR7</accession>
<accession>Q9UBR3</accession>
<accession>Q9UQ43</accession>
<evidence type="ECO:0000250" key="1"/>
<evidence type="ECO:0000250" key="2">
    <source>
        <dbReference type="UniProtKB" id="Q8BKX1"/>
    </source>
</evidence>
<evidence type="ECO:0000255" key="3"/>
<evidence type="ECO:0000255" key="4">
    <source>
        <dbReference type="PROSITE-ProRule" id="PRU00192"/>
    </source>
</evidence>
<evidence type="ECO:0000255" key="5">
    <source>
        <dbReference type="PROSITE-ProRule" id="PRU00668"/>
    </source>
</evidence>
<evidence type="ECO:0000256" key="6">
    <source>
        <dbReference type="SAM" id="MobiDB-lite"/>
    </source>
</evidence>
<evidence type="ECO:0000269" key="7">
    <source>
    </source>
</evidence>
<evidence type="ECO:0000269" key="8">
    <source>
    </source>
</evidence>
<evidence type="ECO:0000269" key="9">
    <source>
    </source>
</evidence>
<evidence type="ECO:0000269" key="10">
    <source>
    </source>
</evidence>
<evidence type="ECO:0000269" key="11">
    <source>
    </source>
</evidence>
<evidence type="ECO:0000269" key="12">
    <source>
    </source>
</evidence>
<evidence type="ECO:0000269" key="13">
    <source>
    </source>
</evidence>
<evidence type="ECO:0000269" key="14">
    <source>
    </source>
</evidence>
<evidence type="ECO:0000269" key="15">
    <source>
    </source>
</evidence>
<evidence type="ECO:0000269" key="16">
    <source>
    </source>
</evidence>
<evidence type="ECO:0000269" key="17">
    <source>
    </source>
</evidence>
<evidence type="ECO:0000269" key="18">
    <source>
    </source>
</evidence>
<evidence type="ECO:0000303" key="19">
    <source>
    </source>
</evidence>
<evidence type="ECO:0000303" key="20">
    <source>
    </source>
</evidence>
<evidence type="ECO:0000303" key="21">
    <source>
    </source>
</evidence>
<evidence type="ECO:0000303" key="22">
    <source ref="4"/>
</evidence>
<evidence type="ECO:0000305" key="23"/>
<evidence type="ECO:0000312" key="24">
    <source>
        <dbReference type="HGNC" id="HGNC:947"/>
    </source>
</evidence>
<evidence type="ECO:0007744" key="25">
    <source>
    </source>
</evidence>
<evidence type="ECO:0007744" key="26">
    <source>
    </source>
</evidence>
<evidence type="ECO:0007744" key="27">
    <source>
    </source>
</evidence>
<evidence type="ECO:0007744" key="28">
    <source>
    </source>
</evidence>
<evidence type="ECO:0007744" key="29">
    <source>
    </source>
</evidence>
<evidence type="ECO:0007829" key="30">
    <source>
        <dbReference type="PDB" id="1WDZ"/>
    </source>
</evidence>
<evidence type="ECO:0007829" key="31">
    <source>
        <dbReference type="PDB" id="1Y2O"/>
    </source>
</evidence>
<evidence type="ECO:0007829" key="32">
    <source>
        <dbReference type="PDB" id="2YKT"/>
    </source>
</evidence>
<evidence type="ECO:0007829" key="33">
    <source>
        <dbReference type="PDB" id="3RNJ"/>
    </source>
</evidence>
<evidence type="ECO:0007829" key="34">
    <source>
        <dbReference type="PDB" id="4JS0"/>
    </source>
</evidence>
<evidence type="ECO:0007829" key="35">
    <source>
        <dbReference type="PDB" id="6ZEI"/>
    </source>
</evidence>
<gene>
    <name type="primary">BAIAP2</name>
</gene>
<proteinExistence type="evidence at protein level"/>
<keyword id="KW-0002">3D-structure</keyword>
<keyword id="KW-0025">Alternative splicing</keyword>
<keyword id="KW-0966">Cell projection</keyword>
<keyword id="KW-0175">Coiled coil</keyword>
<keyword id="KW-0963">Cytoplasm</keyword>
<keyword id="KW-0206">Cytoskeleton</keyword>
<keyword id="KW-0472">Membrane</keyword>
<keyword id="KW-0597">Phosphoprotein</keyword>
<keyword id="KW-1267">Proteomics identification</keyword>
<keyword id="KW-1185">Reference proteome</keyword>
<keyword id="KW-0728">SH3 domain</keyword>
<feature type="chain" id="PRO_0000064816" description="BAR/IMD domain-containing adapter protein 2">
    <location>
        <begin position="1"/>
        <end position="552"/>
    </location>
</feature>
<feature type="domain" description="IMD" evidence="5">
    <location>
        <begin position="1"/>
        <end position="250"/>
    </location>
</feature>
<feature type="domain" description="SH3" evidence="4">
    <location>
        <begin position="374"/>
        <end position="437"/>
    </location>
</feature>
<feature type="region of interest" description="Disordered" evidence="6">
    <location>
        <begin position="295"/>
        <end position="369"/>
    </location>
</feature>
<feature type="region of interest" description="Disordered" evidence="6">
    <location>
        <begin position="447"/>
        <end position="466"/>
    </location>
</feature>
<feature type="region of interest" description="Disordered" evidence="6">
    <location>
        <begin position="525"/>
        <end position="552"/>
    </location>
</feature>
<feature type="coiled-coil region" evidence="3">
    <location>
        <begin position="132"/>
        <end position="153"/>
    </location>
</feature>
<feature type="compositionally biased region" description="Low complexity" evidence="6">
    <location>
        <begin position="320"/>
        <end position="334"/>
    </location>
</feature>
<feature type="compositionally biased region" description="Polar residues" evidence="6">
    <location>
        <begin position="348"/>
        <end position="367"/>
    </location>
</feature>
<feature type="compositionally biased region" description="Polar residues" evidence="6">
    <location>
        <begin position="447"/>
        <end position="457"/>
    </location>
</feature>
<feature type="modified residue" description="Phosphoserine" evidence="28">
    <location>
        <position position="261"/>
    </location>
</feature>
<feature type="modified residue" description="Phosphothreonine" evidence="25">
    <location>
        <position position="296"/>
    </location>
</feature>
<feature type="modified residue" description="Phosphoserine" evidence="25">
    <location>
        <position position="323"/>
    </location>
</feature>
<feature type="modified residue" description="Phosphoserine" evidence="25 28">
    <location>
        <position position="325"/>
    </location>
</feature>
<feature type="modified residue" description="Phosphoserine" evidence="28">
    <location>
        <position position="336"/>
    </location>
</feature>
<feature type="modified residue" description="Phosphothreonine" evidence="26 28">
    <location>
        <position position="340"/>
    </location>
</feature>
<feature type="modified residue" description="Phosphoserine" evidence="25">
    <location>
        <position position="346"/>
    </location>
</feature>
<feature type="modified residue" description="Phosphothreonine" evidence="28">
    <location>
        <position position="360"/>
    </location>
</feature>
<feature type="modified residue" description="Phosphoserine" evidence="25 28 29">
    <location>
        <position position="366"/>
    </location>
</feature>
<feature type="modified residue" description="Phosphoserine" evidence="28">
    <location>
        <position position="384"/>
    </location>
</feature>
<feature type="modified residue" description="Phosphoserine" evidence="2">
    <location>
        <position position="395"/>
    </location>
</feature>
<feature type="modified residue" description="Phosphoserine" evidence="27">
    <location>
        <position position="454"/>
    </location>
</feature>
<feature type="splice variant" id="VSP_015502" description="In isoform 6." evidence="21 22">
    <original>T</original>
    <variation>TA</variation>
    <location>
        <position position="356"/>
    </location>
</feature>
<feature type="splice variant" id="VSP_015503" description="In isoform 4 and isoform 6." evidence="19 20 21 22">
    <original>RNPFAHVQLKPTVTNDRCDLSAQGPEGREHGDGSARTLAGR</original>
    <variation>SGSGTLVSTV</variation>
    <location>
        <begin position="512"/>
        <end position="552"/>
    </location>
</feature>
<feature type="splice variant" id="VSP_015504" description="In isoform 5." evidence="20">
    <original>RNPFAHVQLKPTVTNDRCDLSAQGPEGREHGDGSARTLAGR</original>
    <variation>SADVEVARF</variation>
    <location>
        <begin position="512"/>
        <end position="552"/>
    </location>
</feature>
<feature type="splice variant" id="VSP_015505" description="In isoform 3." evidence="21">
    <location>
        <begin position="513"/>
        <end position="552"/>
    </location>
</feature>
<feature type="splice variant" id="VSP_015506" description="In isoform 2." evidence="23">
    <original>CDLSAQGPEGREHGDGSARTLAGR</original>
    <variation>SAPLLS</variation>
    <location>
        <begin position="529"/>
        <end position="552"/>
    </location>
</feature>
<feature type="sequence variant" id="VAR_050686" description="In dbSNP:rs4969391.">
    <original>Q</original>
    <variation>R</variation>
    <location>
        <position position="519"/>
    </location>
</feature>
<feature type="mutagenesis site" description="Abolishes actin-bundling and filopodia formation; when associated with E-143; E-146 and E147." evidence="15">
    <original>K</original>
    <variation>E</variation>
    <location>
        <position position="142"/>
    </location>
</feature>
<feature type="mutagenesis site" description="Abolishes actin-bundling and filopodia formation; when associated with E-142; E-146 and E147." evidence="15">
    <original>K</original>
    <variation>E</variation>
    <location>
        <position position="143"/>
    </location>
</feature>
<feature type="mutagenesis site" description="Abolishes actin-bundling and filopodia formation; when associated with E-142; E-143 and E147." evidence="15">
    <original>K</original>
    <variation>E</variation>
    <location>
        <position position="146"/>
    </location>
</feature>
<feature type="mutagenesis site" description="Abolishes actin-bundling and filopodia formation; when associated with E-142; E-143 and E146." evidence="15">
    <original>K</original>
    <variation>E</variation>
    <location>
        <position position="147"/>
    </location>
</feature>
<feature type="mutagenesis site" description="Loss of interaction with CDC42. Loss of stimulation of neurite growth." evidence="10">
    <original>I</original>
    <variation>N</variation>
    <location>
        <position position="267"/>
    </location>
</feature>
<feature type="mutagenesis site" description="Impairs the SH3 domain and abolishes the interaction with EPS8." evidence="16">
    <original>W</original>
    <variation>G</variation>
    <location>
        <position position="413"/>
    </location>
</feature>
<feature type="mutagenesis site" description="Loss of interaction with ENAH and no induction of filopodia; when associated with A-428." evidence="11">
    <original>F</original>
    <variation>A</variation>
    <location>
        <position position="427"/>
    </location>
</feature>
<feature type="mutagenesis site" description="Loss of interaction with ENAH and no induction of filopodia; when associated with A-427." evidence="11">
    <original>P</original>
    <variation>A</variation>
    <location>
        <position position="428"/>
    </location>
</feature>
<feature type="sequence conflict" description="In Ref. 4; BAD96390." evidence="23" ref="4">
    <original>R</original>
    <variation>W</variation>
    <location>
        <position position="84"/>
    </location>
</feature>
<feature type="sequence conflict" description="In Ref. 4; BAD96390." evidence="23" ref="4">
    <original>Y</original>
    <variation>H</variation>
    <location>
        <position position="415"/>
    </location>
</feature>
<feature type="sequence conflict" description="In Ref. 4; BAD96390." evidence="23" ref="4">
    <original>A</original>
    <variation>T</variation>
    <location>
        <position position="473"/>
    </location>
</feature>
<feature type="helix" evidence="32">
    <location>
        <begin position="5"/>
        <end position="22"/>
    </location>
</feature>
<feature type="helix" evidence="32">
    <location>
        <begin position="24"/>
        <end position="64"/>
    </location>
</feature>
<feature type="strand" evidence="32">
    <location>
        <begin position="66"/>
        <end position="68"/>
    </location>
</feature>
<feature type="helix" evidence="32">
    <location>
        <begin position="70"/>
        <end position="98"/>
    </location>
</feature>
<feature type="turn" evidence="32">
    <location>
        <begin position="99"/>
        <end position="101"/>
    </location>
</feature>
<feature type="helix" evidence="32">
    <location>
        <begin position="102"/>
        <end position="146"/>
    </location>
</feature>
<feature type="helix" evidence="30">
    <location>
        <begin position="150"/>
        <end position="152"/>
    </location>
</feature>
<feature type="turn" evidence="31">
    <location>
        <begin position="154"/>
        <end position="157"/>
    </location>
</feature>
<feature type="helix" evidence="32">
    <location>
        <begin position="159"/>
        <end position="228"/>
    </location>
</feature>
<feature type="helix" evidence="31">
    <location>
        <begin position="238"/>
        <end position="246"/>
    </location>
</feature>
<feature type="helix" evidence="34">
    <location>
        <begin position="281"/>
        <end position="286"/>
    </location>
</feature>
<feature type="strand" evidence="33">
    <location>
        <begin position="378"/>
        <end position="383"/>
    </location>
</feature>
<feature type="strand" evidence="33">
    <location>
        <begin position="401"/>
        <end position="404"/>
    </location>
</feature>
<feature type="strand" evidence="33">
    <location>
        <begin position="406"/>
        <end position="408"/>
    </location>
</feature>
<feature type="strand" evidence="33">
    <location>
        <begin position="413"/>
        <end position="418"/>
    </location>
</feature>
<feature type="turn" evidence="33">
    <location>
        <begin position="419"/>
        <end position="421"/>
    </location>
</feature>
<feature type="strand" evidence="33">
    <location>
        <begin position="424"/>
        <end position="428"/>
    </location>
</feature>
<feature type="helix" evidence="33">
    <location>
        <begin position="429"/>
        <end position="431"/>
    </location>
</feature>
<feature type="strand" evidence="33">
    <location>
        <begin position="432"/>
        <end position="434"/>
    </location>
</feature>
<feature type="turn" evidence="35">
    <location>
        <begin position="458"/>
        <end position="460"/>
    </location>
</feature>
<dbReference type="EMBL" id="AB015019">
    <property type="protein sequence ID" value="BAA36586.1"/>
    <property type="molecule type" value="mRNA"/>
</dbReference>
<dbReference type="EMBL" id="AB015020">
    <property type="protein sequence ID" value="BAA36587.1"/>
    <property type="molecule type" value="mRNA"/>
</dbReference>
<dbReference type="EMBL" id="AB017119">
    <property type="protein sequence ID" value="BAA74773.1"/>
    <property type="molecule type" value="mRNA"/>
</dbReference>
<dbReference type="EMBL" id="AB017120">
    <property type="protein sequence ID" value="BAA74774.1"/>
    <property type="molecule type" value="mRNA"/>
</dbReference>
<dbReference type="EMBL" id="AB104726">
    <property type="protein sequence ID" value="BAC57945.1"/>
    <property type="molecule type" value="Genomic_DNA"/>
</dbReference>
<dbReference type="EMBL" id="AB104726">
    <property type="protein sequence ID" value="BAC57946.1"/>
    <property type="molecule type" value="Genomic_DNA"/>
</dbReference>
<dbReference type="EMBL" id="AB104726">
    <property type="protein sequence ID" value="BAC57947.1"/>
    <property type="molecule type" value="Genomic_DNA"/>
</dbReference>
<dbReference type="EMBL" id="AB104726">
    <property type="protein sequence ID" value="BAC57948.1"/>
    <property type="molecule type" value="Genomic_DNA"/>
</dbReference>
<dbReference type="EMBL" id="AK222670">
    <property type="protein sequence ID" value="BAD96390.1"/>
    <property type="molecule type" value="mRNA"/>
</dbReference>
<dbReference type="EMBL" id="BC014020">
    <property type="protein sequence ID" value="AAH14020.1"/>
    <property type="molecule type" value="mRNA"/>
</dbReference>
<dbReference type="EMBL" id="BC032559">
    <property type="protein sequence ID" value="AAH32559.1"/>
    <property type="molecule type" value="mRNA"/>
</dbReference>
<dbReference type="EMBL" id="U70669">
    <property type="protein sequence ID" value="AAB93497.1"/>
    <property type="molecule type" value="mRNA"/>
</dbReference>
<dbReference type="CCDS" id="CCDS11775.1">
    <molecule id="Q9UQB8-1"/>
</dbReference>
<dbReference type="CCDS" id="CCDS11776.1">
    <molecule id="Q9UQB8-5"/>
</dbReference>
<dbReference type="CCDS" id="CCDS11777.1">
    <molecule id="Q9UQB8-4"/>
</dbReference>
<dbReference type="CCDS" id="CCDS45806.1">
    <molecule id="Q9UQB8-2"/>
</dbReference>
<dbReference type="RefSeq" id="NP_001138360.1">
    <molecule id="Q9UQB8-2"/>
    <property type="nucleotide sequence ID" value="NM_001144888.2"/>
</dbReference>
<dbReference type="RefSeq" id="NP_001372056.1">
    <molecule id="Q9UQB8-1"/>
    <property type="nucleotide sequence ID" value="NM_001385127.1"/>
</dbReference>
<dbReference type="RefSeq" id="NP_001372057.1">
    <molecule id="Q9UQB8-5"/>
    <property type="nucleotide sequence ID" value="NM_001385128.1"/>
</dbReference>
<dbReference type="RefSeq" id="NP_001372069.1">
    <molecule id="Q9UQB8-6"/>
    <property type="nucleotide sequence ID" value="NM_001385140.1"/>
</dbReference>
<dbReference type="RefSeq" id="NP_006331.1">
    <molecule id="Q9UQB8-5"/>
    <property type="nucleotide sequence ID" value="NM_006340.3"/>
</dbReference>
<dbReference type="RefSeq" id="NP_059344.1">
    <molecule id="Q9UQB8-4"/>
    <property type="nucleotide sequence ID" value="NM_017450.3"/>
</dbReference>
<dbReference type="RefSeq" id="NP_059345.1">
    <molecule id="Q9UQB8-1"/>
    <property type="nucleotide sequence ID" value="NM_017451.3"/>
</dbReference>
<dbReference type="RefSeq" id="XP_005257005.1">
    <property type="nucleotide sequence ID" value="XM_005256948.3"/>
</dbReference>
<dbReference type="PDB" id="1WDZ">
    <property type="method" value="X-ray"/>
    <property type="resolution" value="2.63 A"/>
    <property type="chains" value="A/B=1-228"/>
</dbReference>
<dbReference type="PDB" id="1Y2O">
    <property type="method" value="X-ray"/>
    <property type="resolution" value="2.20 A"/>
    <property type="chains" value="A/B=1-250"/>
</dbReference>
<dbReference type="PDB" id="2YKT">
    <property type="method" value="X-ray"/>
    <property type="resolution" value="2.11 A"/>
    <property type="chains" value="A=1-250"/>
</dbReference>
<dbReference type="PDB" id="3RNJ">
    <property type="method" value="X-ray"/>
    <property type="resolution" value="1.50 A"/>
    <property type="chains" value="A=375-436"/>
</dbReference>
<dbReference type="PDB" id="4JS0">
    <property type="method" value="X-ray"/>
    <property type="resolution" value="1.90 A"/>
    <property type="chains" value="B=260-291"/>
</dbReference>
<dbReference type="PDB" id="6BCR">
    <property type="method" value="X-ray"/>
    <property type="resolution" value="1.99 A"/>
    <property type="chains" value="C/D/G/H=333-346"/>
</dbReference>
<dbReference type="PDB" id="6BCY">
    <property type="method" value="X-ray"/>
    <property type="resolution" value="2.30 A"/>
    <property type="chains" value="C/D/G/H=354-366"/>
</dbReference>
<dbReference type="PDB" id="6BD1">
    <property type="method" value="X-ray"/>
    <property type="resolution" value="2.35 A"/>
    <property type="chains" value="C/D/G/H=360-373"/>
</dbReference>
<dbReference type="PDB" id="6BD2">
    <property type="method" value="X-ray"/>
    <property type="resolution" value="2.90 A"/>
    <property type="chains" value="C=335-372"/>
</dbReference>
<dbReference type="PDB" id="6BQT">
    <property type="method" value="X-ray"/>
    <property type="resolution" value="2.80 A"/>
    <property type="chains" value="C/F/I/L=335-366"/>
</dbReference>
<dbReference type="PDB" id="6ZEG">
    <property type="method" value="X-ray"/>
    <property type="resolution" value="1.09 A"/>
    <property type="chains" value="A/B=448-464"/>
</dbReference>
<dbReference type="PDB" id="6ZEI">
    <property type="method" value="X-ray"/>
    <property type="resolution" value="1.39 A"/>
    <property type="chains" value="A/B=448-464"/>
</dbReference>
<dbReference type="PDBsum" id="1WDZ"/>
<dbReference type="PDBsum" id="1Y2O"/>
<dbReference type="PDBsum" id="2YKT"/>
<dbReference type="PDBsum" id="3RNJ"/>
<dbReference type="PDBsum" id="4JS0"/>
<dbReference type="PDBsum" id="6BCR"/>
<dbReference type="PDBsum" id="6BCY"/>
<dbReference type="PDBsum" id="6BD1"/>
<dbReference type="PDBsum" id="6BD2"/>
<dbReference type="PDBsum" id="6BQT"/>
<dbReference type="PDBsum" id="6ZEG"/>
<dbReference type="PDBsum" id="6ZEI"/>
<dbReference type="SMR" id="Q9UQB8"/>
<dbReference type="BioGRID" id="115721">
    <property type="interactions" value="196"/>
</dbReference>
<dbReference type="DIP" id="DIP-29272N"/>
<dbReference type="FunCoup" id="Q9UQB8">
    <property type="interactions" value="756"/>
</dbReference>
<dbReference type="IntAct" id="Q9UQB8">
    <property type="interactions" value="145"/>
</dbReference>
<dbReference type="MINT" id="Q9UQB8"/>
<dbReference type="STRING" id="9606.ENSP00000316338"/>
<dbReference type="GlyGen" id="Q9UQB8">
    <property type="glycosylation" value="2 sites, 3 N-linked glycans (1 site), 1 O-linked glycan (1 site)"/>
</dbReference>
<dbReference type="iPTMnet" id="Q9UQB8"/>
<dbReference type="PhosphoSitePlus" id="Q9UQB8"/>
<dbReference type="SwissPalm" id="Q9UQB8"/>
<dbReference type="BioMuta" id="BAIAP2"/>
<dbReference type="DMDM" id="73917636"/>
<dbReference type="jPOST" id="Q9UQB8"/>
<dbReference type="MassIVE" id="Q9UQB8"/>
<dbReference type="PaxDb" id="9606-ENSP00000316338"/>
<dbReference type="PeptideAtlas" id="Q9UQB8"/>
<dbReference type="ProteomicsDB" id="85532">
    <molecule id="Q9UQB8-1"/>
</dbReference>
<dbReference type="ProteomicsDB" id="85533">
    <molecule id="Q9UQB8-2"/>
</dbReference>
<dbReference type="ProteomicsDB" id="85534">
    <molecule id="Q9UQB8-3"/>
</dbReference>
<dbReference type="ProteomicsDB" id="85535">
    <molecule id="Q9UQB8-4"/>
</dbReference>
<dbReference type="ProteomicsDB" id="85536">
    <molecule id="Q9UQB8-5"/>
</dbReference>
<dbReference type="ProteomicsDB" id="85537">
    <molecule id="Q9UQB8-6"/>
</dbReference>
<dbReference type="Pumba" id="Q9UQB8"/>
<dbReference type="ABCD" id="Q9UQB8">
    <property type="antibodies" value="11 sequenced antibodies"/>
</dbReference>
<dbReference type="Antibodypedia" id="19790">
    <property type="antibodies" value="549 antibodies from 38 providers"/>
</dbReference>
<dbReference type="DNASU" id="10458"/>
<dbReference type="Ensembl" id="ENST00000321280.11">
    <molecule id="Q9UQB8-4"/>
    <property type="protein sequence ID" value="ENSP00000315685.7"/>
    <property type="gene ID" value="ENSG00000175866.16"/>
</dbReference>
<dbReference type="Ensembl" id="ENST00000321300.10">
    <molecule id="Q9UQB8-1"/>
    <property type="protein sequence ID" value="ENSP00000316338.6"/>
    <property type="gene ID" value="ENSG00000175866.16"/>
</dbReference>
<dbReference type="Ensembl" id="ENST00000428708.7">
    <molecule id="Q9UQB8-2"/>
    <property type="protein sequence ID" value="ENSP00000401022.2"/>
    <property type="gene ID" value="ENSG00000175866.16"/>
</dbReference>
<dbReference type="Ensembl" id="ENST00000435091.7">
    <molecule id="Q9UQB8-5"/>
    <property type="protein sequence ID" value="ENSP00000413069.3"/>
    <property type="gene ID" value="ENSG00000175866.16"/>
</dbReference>
<dbReference type="Ensembl" id="ENST00000575712.5">
    <molecule id="Q9UQB8-3"/>
    <property type="protein sequence ID" value="ENSP00000458964.1"/>
    <property type="gene ID" value="ENSG00000175866.16"/>
</dbReference>
<dbReference type="GeneID" id="10458"/>
<dbReference type="KEGG" id="hsa:10458"/>
<dbReference type="MANE-Select" id="ENST00000428708.7">
    <molecule id="Q9UQB8-2"/>
    <property type="protein sequence ID" value="ENSP00000401022.2"/>
    <property type="RefSeq nucleotide sequence ID" value="NM_001144888.2"/>
    <property type="RefSeq protein sequence ID" value="NP_001138360.1"/>
</dbReference>
<dbReference type="UCSC" id="uc002jyz.5">
    <molecule id="Q9UQB8-1"/>
    <property type="organism name" value="human"/>
</dbReference>
<dbReference type="AGR" id="HGNC:947"/>
<dbReference type="CTD" id="10458"/>
<dbReference type="DisGeNET" id="10458"/>
<dbReference type="GeneCards" id="BAIAP2"/>
<dbReference type="HGNC" id="HGNC:947">
    <property type="gene designation" value="BAIAP2"/>
</dbReference>
<dbReference type="HPA" id="ENSG00000175866">
    <property type="expression patterns" value="Low tissue specificity"/>
</dbReference>
<dbReference type="MIM" id="605475">
    <property type="type" value="gene"/>
</dbReference>
<dbReference type="neXtProt" id="NX_Q9UQB8"/>
<dbReference type="OpenTargets" id="ENSG00000175866"/>
<dbReference type="PharmGKB" id="PA25251"/>
<dbReference type="VEuPathDB" id="HostDB:ENSG00000175866"/>
<dbReference type="eggNOG" id="ENOG502QUM6">
    <property type="taxonomic scope" value="Eukaryota"/>
</dbReference>
<dbReference type="GeneTree" id="ENSGT00940000153560"/>
<dbReference type="HOGENOM" id="CLU_025877_0_1_1"/>
<dbReference type="InParanoid" id="Q9UQB8"/>
<dbReference type="OMA" id="FSHQAKG"/>
<dbReference type="OrthoDB" id="3800937at2759"/>
<dbReference type="PAN-GO" id="Q9UQB8">
    <property type="GO annotations" value="6 GO annotations based on evolutionary models"/>
</dbReference>
<dbReference type="PhylomeDB" id="Q9UQB8"/>
<dbReference type="TreeFam" id="TF325648"/>
<dbReference type="PathwayCommons" id="Q9UQB8"/>
<dbReference type="Reactome" id="R-HSA-2029482">
    <property type="pathway name" value="Regulation of actin dynamics for phagocytic cup formation"/>
</dbReference>
<dbReference type="Reactome" id="R-HSA-4420097">
    <property type="pathway name" value="VEGFA-VEGFR2 Pathway"/>
</dbReference>
<dbReference type="Reactome" id="R-HSA-5663213">
    <property type="pathway name" value="RHO GTPases Activate WASPs and WAVEs"/>
</dbReference>
<dbReference type="Reactome" id="R-HSA-9013148">
    <property type="pathway name" value="CDC42 GTPase cycle"/>
</dbReference>
<dbReference type="Reactome" id="R-HSA-9013149">
    <property type="pathway name" value="RAC1 GTPase cycle"/>
</dbReference>
<dbReference type="Reactome" id="R-HSA-9013423">
    <property type="pathway name" value="RAC3 GTPase cycle"/>
</dbReference>
<dbReference type="Reactome" id="R-HSA-9664422">
    <property type="pathway name" value="FCGR3A-mediated phagocytosis"/>
</dbReference>
<dbReference type="SignaLink" id="Q9UQB8"/>
<dbReference type="SIGNOR" id="Q9UQB8"/>
<dbReference type="BioGRID-ORCS" id="10458">
    <property type="hits" value="24 hits in 1168 CRISPR screens"/>
</dbReference>
<dbReference type="CD-CODE" id="FB4E32DD">
    <property type="entry name" value="Presynaptic clusters and postsynaptic densities"/>
</dbReference>
<dbReference type="ChiTaRS" id="BAIAP2">
    <property type="organism name" value="human"/>
</dbReference>
<dbReference type="EvolutionaryTrace" id="Q9UQB8"/>
<dbReference type="GeneWiki" id="BAIAP2"/>
<dbReference type="GenomeRNAi" id="10458"/>
<dbReference type="Pharos" id="Q9UQB8">
    <property type="development level" value="Tbio"/>
</dbReference>
<dbReference type="PRO" id="PR:Q9UQB8"/>
<dbReference type="Proteomes" id="UP000005640">
    <property type="component" value="Chromosome 17"/>
</dbReference>
<dbReference type="RNAct" id="Q9UQB8">
    <property type="molecule type" value="protein"/>
</dbReference>
<dbReference type="Bgee" id="ENSG00000175866">
    <property type="expression patterns" value="Expressed in Brodmann (1909) area 10 and 172 other cell types or tissues"/>
</dbReference>
<dbReference type="ExpressionAtlas" id="Q9UQB8">
    <property type="expression patterns" value="baseline and differential"/>
</dbReference>
<dbReference type="GO" id="GO:0005912">
    <property type="term" value="C:adherens junction"/>
    <property type="evidence" value="ECO:0007005"/>
    <property type="project" value="BHF-UCL"/>
</dbReference>
<dbReference type="GO" id="GO:0005737">
    <property type="term" value="C:cytoplasm"/>
    <property type="evidence" value="ECO:0000304"/>
    <property type="project" value="ProtInc"/>
</dbReference>
<dbReference type="GO" id="GO:0005829">
    <property type="term" value="C:cytosol"/>
    <property type="evidence" value="ECO:0000314"/>
    <property type="project" value="HPA"/>
</dbReference>
<dbReference type="GO" id="GO:0043198">
    <property type="term" value="C:dendritic shaft"/>
    <property type="evidence" value="ECO:0007669"/>
    <property type="project" value="Ensembl"/>
</dbReference>
<dbReference type="GO" id="GO:0061846">
    <property type="term" value="C:dendritic spine cytoplasm"/>
    <property type="evidence" value="ECO:0007669"/>
    <property type="project" value="Ensembl"/>
</dbReference>
<dbReference type="GO" id="GO:0060076">
    <property type="term" value="C:excitatory synapse"/>
    <property type="evidence" value="ECO:0007669"/>
    <property type="project" value="Ensembl"/>
</dbReference>
<dbReference type="GO" id="GO:0070062">
    <property type="term" value="C:extracellular exosome"/>
    <property type="evidence" value="ECO:0007005"/>
    <property type="project" value="UniProtKB"/>
</dbReference>
<dbReference type="GO" id="GO:0030175">
    <property type="term" value="C:filopodium"/>
    <property type="evidence" value="ECO:0007669"/>
    <property type="project" value="UniProtKB-SubCell"/>
</dbReference>
<dbReference type="GO" id="GO:0098978">
    <property type="term" value="C:glutamatergic synapse"/>
    <property type="evidence" value="ECO:0007669"/>
    <property type="project" value="Ensembl"/>
</dbReference>
<dbReference type="GO" id="GO:0030027">
    <property type="term" value="C:lamellipodium"/>
    <property type="evidence" value="ECO:0007669"/>
    <property type="project" value="Ensembl"/>
</dbReference>
<dbReference type="GO" id="GO:0005874">
    <property type="term" value="C:microtubule"/>
    <property type="evidence" value="ECO:0007669"/>
    <property type="project" value="Ensembl"/>
</dbReference>
<dbReference type="GO" id="GO:0061845">
    <property type="term" value="C:neuron projection branch point"/>
    <property type="evidence" value="ECO:0007669"/>
    <property type="project" value="Ensembl"/>
</dbReference>
<dbReference type="GO" id="GO:0044306">
    <property type="term" value="C:neuron projection terminus"/>
    <property type="evidence" value="ECO:0007669"/>
    <property type="project" value="Ensembl"/>
</dbReference>
<dbReference type="GO" id="GO:0043025">
    <property type="term" value="C:neuronal cell body"/>
    <property type="evidence" value="ECO:0007669"/>
    <property type="project" value="Ensembl"/>
</dbReference>
<dbReference type="GO" id="GO:0005654">
    <property type="term" value="C:nucleoplasm"/>
    <property type="evidence" value="ECO:0000318"/>
    <property type="project" value="GO_Central"/>
</dbReference>
<dbReference type="GO" id="GO:0005886">
    <property type="term" value="C:plasma membrane"/>
    <property type="evidence" value="ECO:0000314"/>
    <property type="project" value="HPA"/>
</dbReference>
<dbReference type="GO" id="GO:0099524">
    <property type="term" value="C:postsynaptic cytosol"/>
    <property type="evidence" value="ECO:0007669"/>
    <property type="project" value="Ensembl"/>
</dbReference>
<dbReference type="GO" id="GO:0099092">
    <property type="term" value="C:postsynaptic density, intracellular component"/>
    <property type="evidence" value="ECO:0007669"/>
    <property type="project" value="Ensembl"/>
</dbReference>
<dbReference type="GO" id="GO:0099523">
    <property type="term" value="C:presynaptic cytosol"/>
    <property type="evidence" value="ECO:0007669"/>
    <property type="project" value="Ensembl"/>
</dbReference>
<dbReference type="GO" id="GO:0001726">
    <property type="term" value="C:ruffle"/>
    <property type="evidence" value="ECO:0007669"/>
    <property type="project" value="UniProtKB-SubCell"/>
</dbReference>
<dbReference type="GO" id="GO:0098685">
    <property type="term" value="C:Schaffer collateral - CA1 synapse"/>
    <property type="evidence" value="ECO:0007669"/>
    <property type="project" value="Ensembl"/>
</dbReference>
<dbReference type="GO" id="GO:0030141">
    <property type="term" value="C:secretory granule"/>
    <property type="evidence" value="ECO:0007669"/>
    <property type="project" value="Ensembl"/>
</dbReference>
<dbReference type="GO" id="GO:0097060">
    <property type="term" value="C:synaptic membrane"/>
    <property type="evidence" value="ECO:0007669"/>
    <property type="project" value="Ensembl"/>
</dbReference>
<dbReference type="GO" id="GO:0098641">
    <property type="term" value="F:cadherin binding involved in cell-cell adhesion"/>
    <property type="evidence" value="ECO:0007005"/>
    <property type="project" value="BHF-UCL"/>
</dbReference>
<dbReference type="GO" id="GO:0008093">
    <property type="term" value="F:cytoskeletal anchor activity"/>
    <property type="evidence" value="ECO:0000304"/>
    <property type="project" value="ProtInc"/>
</dbReference>
<dbReference type="GO" id="GO:0042802">
    <property type="term" value="F:identical protein binding"/>
    <property type="evidence" value="ECO:0000353"/>
    <property type="project" value="IntAct"/>
</dbReference>
<dbReference type="GO" id="GO:0030165">
    <property type="term" value="F:PDZ domain binding"/>
    <property type="evidence" value="ECO:0007669"/>
    <property type="project" value="Ensembl"/>
</dbReference>
<dbReference type="GO" id="GO:0070064">
    <property type="term" value="F:proline-rich region binding"/>
    <property type="evidence" value="ECO:0000314"/>
    <property type="project" value="UniProtKB"/>
</dbReference>
<dbReference type="GO" id="GO:0097110">
    <property type="term" value="F:scaffold protein binding"/>
    <property type="evidence" value="ECO:0007669"/>
    <property type="project" value="Ensembl"/>
</dbReference>
<dbReference type="GO" id="GO:0001221">
    <property type="term" value="F:transcription coregulator binding"/>
    <property type="evidence" value="ECO:0007669"/>
    <property type="project" value="Ensembl"/>
</dbReference>
<dbReference type="GO" id="GO:0051764">
    <property type="term" value="P:actin crosslink formation"/>
    <property type="evidence" value="ECO:0000250"/>
    <property type="project" value="UniProtKB"/>
</dbReference>
<dbReference type="GO" id="GO:0051017">
    <property type="term" value="P:actin filament bundle assembly"/>
    <property type="evidence" value="ECO:0000250"/>
    <property type="project" value="UniProtKB"/>
</dbReference>
<dbReference type="GO" id="GO:0007409">
    <property type="term" value="P:axonogenesis"/>
    <property type="evidence" value="ECO:0000304"/>
    <property type="project" value="ProtInc"/>
</dbReference>
<dbReference type="GO" id="GO:0071364">
    <property type="term" value="P:cellular response to epidermal growth factor stimulus"/>
    <property type="evidence" value="ECO:0007669"/>
    <property type="project" value="Ensembl"/>
</dbReference>
<dbReference type="GO" id="GO:1905232">
    <property type="term" value="P:cellular response to L-glutamate"/>
    <property type="evidence" value="ECO:0007669"/>
    <property type="project" value="Ensembl"/>
</dbReference>
<dbReference type="GO" id="GO:0016358">
    <property type="term" value="P:dendrite development"/>
    <property type="evidence" value="ECO:0007669"/>
    <property type="project" value="Ensembl"/>
</dbReference>
<dbReference type="GO" id="GO:0008286">
    <property type="term" value="P:insulin receptor signaling pathway"/>
    <property type="evidence" value="ECO:0000304"/>
    <property type="project" value="ProtInc"/>
</dbReference>
<dbReference type="GO" id="GO:0007009">
    <property type="term" value="P:plasma membrane organization"/>
    <property type="evidence" value="ECO:0007669"/>
    <property type="project" value="InterPro"/>
</dbReference>
<dbReference type="GO" id="GO:0030838">
    <property type="term" value="P:positive regulation of actin filament polymerization"/>
    <property type="evidence" value="ECO:0000318"/>
    <property type="project" value="GO_Central"/>
</dbReference>
<dbReference type="GO" id="GO:0061003">
    <property type="term" value="P:positive regulation of dendritic spine morphogenesis"/>
    <property type="evidence" value="ECO:0007669"/>
    <property type="project" value="Ensembl"/>
</dbReference>
<dbReference type="GO" id="GO:2000463">
    <property type="term" value="P:positive regulation of excitatory postsynaptic potential"/>
    <property type="evidence" value="ECO:0007669"/>
    <property type="project" value="Ensembl"/>
</dbReference>
<dbReference type="GO" id="GO:0035418">
    <property type="term" value="P:protein localization to synapse"/>
    <property type="evidence" value="ECO:0007669"/>
    <property type="project" value="Ensembl"/>
</dbReference>
<dbReference type="GO" id="GO:0032956">
    <property type="term" value="P:regulation of actin cytoskeleton organization"/>
    <property type="evidence" value="ECO:0000315"/>
    <property type="project" value="UniProtKB"/>
</dbReference>
<dbReference type="GO" id="GO:0008360">
    <property type="term" value="P:regulation of cell shape"/>
    <property type="evidence" value="ECO:0000250"/>
    <property type="project" value="UniProtKB"/>
</dbReference>
<dbReference type="GO" id="GO:1905274">
    <property type="term" value="P:regulation of modification of postsynaptic actin cytoskeleton"/>
    <property type="evidence" value="ECO:0007669"/>
    <property type="project" value="Ensembl"/>
</dbReference>
<dbReference type="GO" id="GO:0048167">
    <property type="term" value="P:regulation of synaptic plasticity"/>
    <property type="evidence" value="ECO:0007669"/>
    <property type="project" value="Ensembl"/>
</dbReference>
<dbReference type="CDD" id="cd07646">
    <property type="entry name" value="I-BAR_IMD_IRSp53"/>
    <property type="match status" value="1"/>
</dbReference>
<dbReference type="CDD" id="cd11915">
    <property type="entry name" value="SH3_Irsp53"/>
    <property type="match status" value="1"/>
</dbReference>
<dbReference type="FunFam" id="1.20.1270.60:FF:000011">
    <property type="entry name" value="Brain-specific angiogenesis inhibitor 1-associated protein 2"/>
    <property type="match status" value="1"/>
</dbReference>
<dbReference type="FunFam" id="2.30.30.40:FF:000018">
    <property type="entry name" value="Brain-specific angiogenesis inhibitor 1-associated protein 2"/>
    <property type="match status" value="1"/>
</dbReference>
<dbReference type="Gene3D" id="1.20.1270.60">
    <property type="entry name" value="Arfaptin homology (AH) domain/BAR domain"/>
    <property type="match status" value="1"/>
</dbReference>
<dbReference type="Gene3D" id="2.30.30.40">
    <property type="entry name" value="SH3 Domains"/>
    <property type="match status" value="1"/>
</dbReference>
<dbReference type="InterPro" id="IPR027267">
    <property type="entry name" value="AH/BAR_dom_sf"/>
</dbReference>
<dbReference type="InterPro" id="IPR030128">
    <property type="entry name" value="BAIP2_I-BAR_dom"/>
</dbReference>
<dbReference type="InterPro" id="IPR035594">
    <property type="entry name" value="BAIP2_SH3"/>
</dbReference>
<dbReference type="InterPro" id="IPR013606">
    <property type="entry name" value="I-BAR_dom"/>
</dbReference>
<dbReference type="InterPro" id="IPR027681">
    <property type="entry name" value="IRSp53/IRTKS/Pinkbar"/>
</dbReference>
<dbReference type="InterPro" id="IPR036028">
    <property type="entry name" value="SH3-like_dom_sf"/>
</dbReference>
<dbReference type="InterPro" id="IPR001452">
    <property type="entry name" value="SH3_domain"/>
</dbReference>
<dbReference type="PANTHER" id="PTHR14206">
    <property type="entry name" value="BRAIN-SPECIFIC ANGIOGENESIS INHIBITOR 1-ASSOCIATED PROTEIN 2"/>
    <property type="match status" value="1"/>
</dbReference>
<dbReference type="PANTHER" id="PTHR14206:SF3">
    <property type="entry name" value="BRAIN-SPECIFIC ANGIOGENESIS INHIBITOR 1-ASSOCIATED PROTEIN 2"/>
    <property type="match status" value="1"/>
</dbReference>
<dbReference type="Pfam" id="PF08397">
    <property type="entry name" value="IMD"/>
    <property type="match status" value="1"/>
</dbReference>
<dbReference type="Pfam" id="PF07653">
    <property type="entry name" value="SH3_2"/>
    <property type="match status" value="1"/>
</dbReference>
<dbReference type="SMART" id="SM00326">
    <property type="entry name" value="SH3"/>
    <property type="match status" value="1"/>
</dbReference>
<dbReference type="SUPFAM" id="SSF103657">
    <property type="entry name" value="BAR/IMD domain-like"/>
    <property type="match status" value="1"/>
</dbReference>
<dbReference type="SUPFAM" id="SSF50044">
    <property type="entry name" value="SH3-domain"/>
    <property type="match status" value="1"/>
</dbReference>
<dbReference type="PROSITE" id="PS51338">
    <property type="entry name" value="IMD"/>
    <property type="match status" value="1"/>
</dbReference>
<dbReference type="PROSITE" id="PS50002">
    <property type="entry name" value="SH3"/>
    <property type="match status" value="1"/>
</dbReference>
<name>BAIP2_HUMAN</name>
<organism>
    <name type="scientific">Homo sapiens</name>
    <name type="common">Human</name>
    <dbReference type="NCBI Taxonomy" id="9606"/>
    <lineage>
        <taxon>Eukaryota</taxon>
        <taxon>Metazoa</taxon>
        <taxon>Chordata</taxon>
        <taxon>Craniata</taxon>
        <taxon>Vertebrata</taxon>
        <taxon>Euteleostomi</taxon>
        <taxon>Mammalia</taxon>
        <taxon>Eutheria</taxon>
        <taxon>Euarchontoglires</taxon>
        <taxon>Primates</taxon>
        <taxon>Haplorrhini</taxon>
        <taxon>Catarrhini</taxon>
        <taxon>Hominidae</taxon>
        <taxon>Homo</taxon>
    </lineage>
</organism>
<protein>
    <recommendedName>
        <fullName evidence="24">BAR/IMD domain-containing adapter protein 2</fullName>
    </recommendedName>
    <alternativeName>
        <fullName>Brain-specific angiogenesis inhibitor 1-associated protein 2</fullName>
        <shortName>BAI-associated protein 2</shortName>
        <shortName>BAI1-associated protein 2</shortName>
        <shortName>Protein BAP2</shortName>
    </alternativeName>
    <alternativeName>
        <fullName>Fas ligand-associated factor 3</fullName>
        <shortName>FLAF3</shortName>
    </alternativeName>
    <alternativeName>
        <fullName>Insulin receptor substrate p53/p58</fullName>
        <shortName>IRS-58</shortName>
        <shortName>IRSp53/58</shortName>
    </alternativeName>
    <alternativeName>
        <fullName>Insulin receptor substrate protein of 53 kDa</fullName>
        <shortName>IRSp53</shortName>
        <shortName>Insulin receptor substrate p53</shortName>
    </alternativeName>
</protein>